<name>KAD_AERHH</name>
<evidence type="ECO:0000255" key="1">
    <source>
        <dbReference type="HAMAP-Rule" id="MF_00235"/>
    </source>
</evidence>
<dbReference type="EC" id="2.7.4.3" evidence="1"/>
<dbReference type="EMBL" id="CP000462">
    <property type="protein sequence ID" value="ABK38617.1"/>
    <property type="molecule type" value="Genomic_DNA"/>
</dbReference>
<dbReference type="RefSeq" id="WP_011706319.1">
    <property type="nucleotide sequence ID" value="NC_008570.1"/>
</dbReference>
<dbReference type="RefSeq" id="YP_857003.1">
    <property type="nucleotide sequence ID" value="NC_008570.1"/>
</dbReference>
<dbReference type="SMR" id="A0KL52"/>
<dbReference type="STRING" id="380703.AHA_2489"/>
<dbReference type="EnsemblBacteria" id="ABK38617">
    <property type="protein sequence ID" value="ABK38617"/>
    <property type="gene ID" value="AHA_2489"/>
</dbReference>
<dbReference type="GeneID" id="4490790"/>
<dbReference type="KEGG" id="aha:AHA_2489"/>
<dbReference type="PATRIC" id="fig|380703.7.peg.2488"/>
<dbReference type="eggNOG" id="COG0563">
    <property type="taxonomic scope" value="Bacteria"/>
</dbReference>
<dbReference type="HOGENOM" id="CLU_032354_1_2_6"/>
<dbReference type="OrthoDB" id="9805030at2"/>
<dbReference type="UniPathway" id="UPA00588">
    <property type="reaction ID" value="UER00649"/>
</dbReference>
<dbReference type="Proteomes" id="UP000000756">
    <property type="component" value="Chromosome"/>
</dbReference>
<dbReference type="GO" id="GO:0005737">
    <property type="term" value="C:cytoplasm"/>
    <property type="evidence" value="ECO:0007669"/>
    <property type="project" value="UniProtKB-SubCell"/>
</dbReference>
<dbReference type="GO" id="GO:0004017">
    <property type="term" value="F:adenylate kinase activity"/>
    <property type="evidence" value="ECO:0007669"/>
    <property type="project" value="UniProtKB-UniRule"/>
</dbReference>
<dbReference type="GO" id="GO:0005524">
    <property type="term" value="F:ATP binding"/>
    <property type="evidence" value="ECO:0007669"/>
    <property type="project" value="UniProtKB-UniRule"/>
</dbReference>
<dbReference type="GO" id="GO:0044209">
    <property type="term" value="P:AMP salvage"/>
    <property type="evidence" value="ECO:0007669"/>
    <property type="project" value="UniProtKB-UniRule"/>
</dbReference>
<dbReference type="CDD" id="cd01428">
    <property type="entry name" value="ADK"/>
    <property type="match status" value="1"/>
</dbReference>
<dbReference type="FunFam" id="3.40.50.300:FF:000106">
    <property type="entry name" value="Adenylate kinase mitochondrial"/>
    <property type="match status" value="1"/>
</dbReference>
<dbReference type="Gene3D" id="3.40.50.300">
    <property type="entry name" value="P-loop containing nucleotide triphosphate hydrolases"/>
    <property type="match status" value="1"/>
</dbReference>
<dbReference type="HAMAP" id="MF_00235">
    <property type="entry name" value="Adenylate_kinase_Adk"/>
    <property type="match status" value="1"/>
</dbReference>
<dbReference type="InterPro" id="IPR006259">
    <property type="entry name" value="Adenyl_kin_sub"/>
</dbReference>
<dbReference type="InterPro" id="IPR000850">
    <property type="entry name" value="Adenylat/UMP-CMP_kin"/>
</dbReference>
<dbReference type="InterPro" id="IPR033690">
    <property type="entry name" value="Adenylat_kinase_CS"/>
</dbReference>
<dbReference type="InterPro" id="IPR007862">
    <property type="entry name" value="Adenylate_kinase_lid-dom"/>
</dbReference>
<dbReference type="InterPro" id="IPR027417">
    <property type="entry name" value="P-loop_NTPase"/>
</dbReference>
<dbReference type="NCBIfam" id="TIGR01351">
    <property type="entry name" value="adk"/>
    <property type="match status" value="1"/>
</dbReference>
<dbReference type="NCBIfam" id="NF001379">
    <property type="entry name" value="PRK00279.1-1"/>
    <property type="match status" value="1"/>
</dbReference>
<dbReference type="NCBIfam" id="NF001380">
    <property type="entry name" value="PRK00279.1-2"/>
    <property type="match status" value="1"/>
</dbReference>
<dbReference type="NCBIfam" id="NF001381">
    <property type="entry name" value="PRK00279.1-3"/>
    <property type="match status" value="1"/>
</dbReference>
<dbReference type="NCBIfam" id="NF011100">
    <property type="entry name" value="PRK14527.1"/>
    <property type="match status" value="1"/>
</dbReference>
<dbReference type="PANTHER" id="PTHR23359">
    <property type="entry name" value="NUCLEOTIDE KINASE"/>
    <property type="match status" value="1"/>
</dbReference>
<dbReference type="Pfam" id="PF00406">
    <property type="entry name" value="ADK"/>
    <property type="match status" value="1"/>
</dbReference>
<dbReference type="Pfam" id="PF05191">
    <property type="entry name" value="ADK_lid"/>
    <property type="match status" value="1"/>
</dbReference>
<dbReference type="PRINTS" id="PR00094">
    <property type="entry name" value="ADENYLTKNASE"/>
</dbReference>
<dbReference type="SUPFAM" id="SSF52540">
    <property type="entry name" value="P-loop containing nucleoside triphosphate hydrolases"/>
    <property type="match status" value="1"/>
</dbReference>
<dbReference type="PROSITE" id="PS00113">
    <property type="entry name" value="ADENYLATE_KINASE"/>
    <property type="match status" value="1"/>
</dbReference>
<proteinExistence type="inferred from homology"/>
<sequence>MRIVLLGAPGAGKGTQAQFIMEKHGIPQISTGDMLRAAIKAGTELGLKAKAVMDAGQLVSDDIIIGLVKERIAQPDCANGFLLDGFPRTIPQAQAMKDAGVAVDFVLEFDVPDEEIVKRMSGRRVHSGSGRTYHVVFNPPKVEGKDDVTGEDLVIRADDEETTVRKRLDVYHQQTAPLIGFYGKEAEAGNTRYVKIDGTQPVDLVSKQLATILG</sequence>
<reference key="1">
    <citation type="journal article" date="2006" name="J. Bacteriol.">
        <title>Genome sequence of Aeromonas hydrophila ATCC 7966T: jack of all trades.</title>
        <authorList>
            <person name="Seshadri R."/>
            <person name="Joseph S.W."/>
            <person name="Chopra A.K."/>
            <person name="Sha J."/>
            <person name="Shaw J."/>
            <person name="Graf J."/>
            <person name="Haft D.H."/>
            <person name="Wu M."/>
            <person name="Ren Q."/>
            <person name="Rosovitz M.J."/>
            <person name="Madupu R."/>
            <person name="Tallon L."/>
            <person name="Kim M."/>
            <person name="Jin S."/>
            <person name="Vuong H."/>
            <person name="Stine O.C."/>
            <person name="Ali A."/>
            <person name="Horneman A.J."/>
            <person name="Heidelberg J.F."/>
        </authorList>
    </citation>
    <scope>NUCLEOTIDE SEQUENCE [LARGE SCALE GENOMIC DNA]</scope>
    <source>
        <strain>ATCC 7966 / DSM 30187 / BCRC 13018 / CCUG 14551 / JCM 1027 / KCTC 2358 / NCIMB 9240 / NCTC 8049</strain>
    </source>
</reference>
<gene>
    <name evidence="1" type="primary">adk</name>
    <name type="ordered locus">AHA_2489</name>
</gene>
<comment type="function">
    <text evidence="1">Catalyzes the reversible transfer of the terminal phosphate group between ATP and AMP. Plays an important role in cellular energy homeostasis and in adenine nucleotide metabolism.</text>
</comment>
<comment type="catalytic activity">
    <reaction evidence="1">
        <text>AMP + ATP = 2 ADP</text>
        <dbReference type="Rhea" id="RHEA:12973"/>
        <dbReference type="ChEBI" id="CHEBI:30616"/>
        <dbReference type="ChEBI" id="CHEBI:456215"/>
        <dbReference type="ChEBI" id="CHEBI:456216"/>
        <dbReference type="EC" id="2.7.4.3"/>
    </reaction>
</comment>
<comment type="pathway">
    <text evidence="1">Purine metabolism; AMP biosynthesis via salvage pathway; AMP from ADP: step 1/1.</text>
</comment>
<comment type="subunit">
    <text evidence="1">Monomer.</text>
</comment>
<comment type="subcellular location">
    <subcellularLocation>
        <location evidence="1">Cytoplasm</location>
    </subcellularLocation>
</comment>
<comment type="domain">
    <text evidence="1">Consists of three domains, a large central CORE domain and two small peripheral domains, NMPbind and LID, which undergo movements during catalysis. The LID domain closes over the site of phosphoryl transfer upon ATP binding. Assembling and dissambling the active center during each catalytic cycle provides an effective means to prevent ATP hydrolysis.</text>
</comment>
<comment type="similarity">
    <text evidence="1">Belongs to the adenylate kinase family.</text>
</comment>
<feature type="chain" id="PRO_1000058778" description="Adenylate kinase">
    <location>
        <begin position="1"/>
        <end position="214"/>
    </location>
</feature>
<feature type="region of interest" description="NMP" evidence="1">
    <location>
        <begin position="30"/>
        <end position="59"/>
    </location>
</feature>
<feature type="region of interest" description="LID" evidence="1">
    <location>
        <begin position="122"/>
        <end position="159"/>
    </location>
</feature>
<feature type="binding site" evidence="1">
    <location>
        <begin position="10"/>
        <end position="15"/>
    </location>
    <ligand>
        <name>ATP</name>
        <dbReference type="ChEBI" id="CHEBI:30616"/>
    </ligand>
</feature>
<feature type="binding site" evidence="1">
    <location>
        <position position="31"/>
    </location>
    <ligand>
        <name>AMP</name>
        <dbReference type="ChEBI" id="CHEBI:456215"/>
    </ligand>
</feature>
<feature type="binding site" evidence="1">
    <location>
        <position position="36"/>
    </location>
    <ligand>
        <name>AMP</name>
        <dbReference type="ChEBI" id="CHEBI:456215"/>
    </ligand>
</feature>
<feature type="binding site" evidence="1">
    <location>
        <begin position="57"/>
        <end position="59"/>
    </location>
    <ligand>
        <name>AMP</name>
        <dbReference type="ChEBI" id="CHEBI:456215"/>
    </ligand>
</feature>
<feature type="binding site" evidence="1">
    <location>
        <begin position="85"/>
        <end position="88"/>
    </location>
    <ligand>
        <name>AMP</name>
        <dbReference type="ChEBI" id="CHEBI:456215"/>
    </ligand>
</feature>
<feature type="binding site" evidence="1">
    <location>
        <position position="92"/>
    </location>
    <ligand>
        <name>AMP</name>
        <dbReference type="ChEBI" id="CHEBI:456215"/>
    </ligand>
</feature>
<feature type="binding site" evidence="1">
    <location>
        <position position="123"/>
    </location>
    <ligand>
        <name>ATP</name>
        <dbReference type="ChEBI" id="CHEBI:30616"/>
    </ligand>
</feature>
<feature type="binding site" evidence="1">
    <location>
        <begin position="132"/>
        <end position="133"/>
    </location>
    <ligand>
        <name>ATP</name>
        <dbReference type="ChEBI" id="CHEBI:30616"/>
    </ligand>
</feature>
<feature type="binding site" evidence="1">
    <location>
        <position position="156"/>
    </location>
    <ligand>
        <name>AMP</name>
        <dbReference type="ChEBI" id="CHEBI:456215"/>
    </ligand>
</feature>
<feature type="binding site" evidence="1">
    <location>
        <position position="167"/>
    </location>
    <ligand>
        <name>AMP</name>
        <dbReference type="ChEBI" id="CHEBI:456215"/>
    </ligand>
</feature>
<feature type="binding site" evidence="1">
    <location>
        <position position="200"/>
    </location>
    <ligand>
        <name>ATP</name>
        <dbReference type="ChEBI" id="CHEBI:30616"/>
    </ligand>
</feature>
<organism>
    <name type="scientific">Aeromonas hydrophila subsp. hydrophila (strain ATCC 7966 / DSM 30187 / BCRC 13018 / CCUG 14551 / JCM 1027 / KCTC 2358 / NCIMB 9240 / NCTC 8049)</name>
    <dbReference type="NCBI Taxonomy" id="380703"/>
    <lineage>
        <taxon>Bacteria</taxon>
        <taxon>Pseudomonadati</taxon>
        <taxon>Pseudomonadota</taxon>
        <taxon>Gammaproteobacteria</taxon>
        <taxon>Aeromonadales</taxon>
        <taxon>Aeromonadaceae</taxon>
        <taxon>Aeromonas</taxon>
    </lineage>
</organism>
<accession>A0KL52</accession>
<keyword id="KW-0067">ATP-binding</keyword>
<keyword id="KW-0963">Cytoplasm</keyword>
<keyword id="KW-0418">Kinase</keyword>
<keyword id="KW-0545">Nucleotide biosynthesis</keyword>
<keyword id="KW-0547">Nucleotide-binding</keyword>
<keyword id="KW-1185">Reference proteome</keyword>
<keyword id="KW-0808">Transferase</keyword>
<protein>
    <recommendedName>
        <fullName evidence="1">Adenylate kinase</fullName>
        <shortName evidence="1">AK</shortName>
        <ecNumber evidence="1">2.7.4.3</ecNumber>
    </recommendedName>
    <alternativeName>
        <fullName evidence="1">ATP-AMP transphosphorylase</fullName>
    </alternativeName>
    <alternativeName>
        <fullName evidence="1">ATP:AMP phosphotransferase</fullName>
    </alternativeName>
    <alternativeName>
        <fullName evidence="1">Adenylate monophosphate kinase</fullName>
    </alternativeName>
</protein>